<keyword id="KW-0489">Methyltransferase</keyword>
<keyword id="KW-1185">Reference proteome</keyword>
<keyword id="KW-0949">S-adenosyl-L-methionine</keyword>
<keyword id="KW-0808">Transferase</keyword>
<sequence length="302" mass="32705">MTTPQFGSQRSDDDNWDIVSSVGYTALLVAGWRALHAVSPRPLVRDDYAKTFIAASGDPYLTGVLANPGTSEDELAFPRLYGAQTRFFDDFFDAAGAAGIRQAVIIAAGLDSRAYRLEWPPATTVFEVDLAKVLEFKARVLGEQGAVPKARRVEVAADLRADWSRPLEAAGFDVESPSAWSVEGLLPYLTDEAQHALFTRISGLSAPGSRIAIGALGSRLDHDQLHALEESHPGVDVSGNVDFSALTYEPQSDPAEWLAAHGWVVDPVRNTLDLQAGYGMTPPEVDVKIDGFMRSQYITAAR</sequence>
<evidence type="ECO:0000250" key="1"/>
<evidence type="ECO:0000305" key="2"/>
<organism>
    <name type="scientific">Mycolicibacterium paratuberculosis (strain ATCC BAA-968 / K-10)</name>
    <name type="common">Mycobacterium paratuberculosis</name>
    <dbReference type="NCBI Taxonomy" id="262316"/>
    <lineage>
        <taxon>Bacteria</taxon>
        <taxon>Bacillati</taxon>
        <taxon>Actinomycetota</taxon>
        <taxon>Actinomycetes</taxon>
        <taxon>Mycobacteriales</taxon>
        <taxon>Mycobacteriaceae</taxon>
        <taxon>Mycobacterium</taxon>
        <taxon>Mycobacterium avium complex (MAC)</taxon>
    </lineage>
</organism>
<accession>Q73ZI1</accession>
<name>Y1622_MYCPA</name>
<protein>
    <recommendedName>
        <fullName>Putative S-adenosyl-L-methionine-dependent methyltransferase MAP_1622c</fullName>
        <ecNumber>2.1.1.-</ecNumber>
    </recommendedName>
</protein>
<feature type="chain" id="PRO_0000361176" description="Putative S-adenosyl-L-methionine-dependent methyltransferase MAP_1622c">
    <location>
        <begin position="1"/>
        <end position="302"/>
    </location>
</feature>
<feature type="binding site" evidence="1">
    <location>
        <position position="129"/>
    </location>
    <ligand>
        <name>S-adenosyl-L-methionine</name>
        <dbReference type="ChEBI" id="CHEBI:59789"/>
    </ligand>
</feature>
<feature type="binding site" evidence="1">
    <location>
        <begin position="158"/>
        <end position="159"/>
    </location>
    <ligand>
        <name>S-adenosyl-L-methionine</name>
        <dbReference type="ChEBI" id="CHEBI:59789"/>
    </ligand>
</feature>
<proteinExistence type="inferred from homology"/>
<gene>
    <name type="ordered locus">MAP_1622c</name>
</gene>
<reference key="1">
    <citation type="journal article" date="2005" name="Proc. Natl. Acad. Sci. U.S.A.">
        <title>The complete genome sequence of Mycobacterium avium subspecies paratuberculosis.</title>
        <authorList>
            <person name="Li L."/>
            <person name="Bannantine J.P."/>
            <person name="Zhang Q."/>
            <person name="Amonsin A."/>
            <person name="May B.J."/>
            <person name="Alt D."/>
            <person name="Banerji N."/>
            <person name="Kanjilal S."/>
            <person name="Kapur V."/>
        </authorList>
    </citation>
    <scope>NUCLEOTIDE SEQUENCE [LARGE SCALE GENOMIC DNA]</scope>
    <source>
        <strain>ATCC BAA-968 / K-10</strain>
    </source>
</reference>
<comment type="function">
    <text evidence="1">Exhibits S-adenosyl-L-methionine-dependent methyltransferase activity.</text>
</comment>
<comment type="similarity">
    <text evidence="2">Belongs to the UPF0677 family.</text>
</comment>
<dbReference type="EC" id="2.1.1.-"/>
<dbReference type="EMBL" id="AE016958">
    <property type="protein sequence ID" value="AAS03939.1"/>
    <property type="molecule type" value="Genomic_DNA"/>
</dbReference>
<dbReference type="SMR" id="Q73ZI1"/>
<dbReference type="STRING" id="262316.MAP_1622c"/>
<dbReference type="KEGG" id="mpa:MAP_1622c"/>
<dbReference type="PATRIC" id="fig|262316.17.peg.1715"/>
<dbReference type="eggNOG" id="COG3315">
    <property type="taxonomic scope" value="Bacteria"/>
</dbReference>
<dbReference type="HOGENOM" id="CLU_056160_2_1_11"/>
<dbReference type="Proteomes" id="UP000000580">
    <property type="component" value="Chromosome"/>
</dbReference>
<dbReference type="GO" id="GO:0008168">
    <property type="term" value="F:methyltransferase activity"/>
    <property type="evidence" value="ECO:0007669"/>
    <property type="project" value="UniProtKB-KW"/>
</dbReference>
<dbReference type="GO" id="GO:0032259">
    <property type="term" value="P:methylation"/>
    <property type="evidence" value="ECO:0007669"/>
    <property type="project" value="UniProtKB-KW"/>
</dbReference>
<dbReference type="Gene3D" id="3.40.50.150">
    <property type="entry name" value="Vaccinia Virus protein VP39"/>
    <property type="match status" value="1"/>
</dbReference>
<dbReference type="InterPro" id="IPR007213">
    <property type="entry name" value="Ppm1/Ppm2/Tcmp"/>
</dbReference>
<dbReference type="InterPro" id="IPR029063">
    <property type="entry name" value="SAM-dependent_MTases_sf"/>
</dbReference>
<dbReference type="InterPro" id="IPR011610">
    <property type="entry name" value="SAM_mthyl_Trfase_ML2640-like"/>
</dbReference>
<dbReference type="NCBIfam" id="TIGR00027">
    <property type="entry name" value="mthyl_TIGR00027"/>
    <property type="match status" value="1"/>
</dbReference>
<dbReference type="PANTHER" id="PTHR43619">
    <property type="entry name" value="S-ADENOSYL-L-METHIONINE-DEPENDENT METHYLTRANSFERASE YKTD-RELATED"/>
    <property type="match status" value="1"/>
</dbReference>
<dbReference type="PANTHER" id="PTHR43619:SF2">
    <property type="entry name" value="S-ADENOSYL-L-METHIONINE-DEPENDENT METHYLTRANSFERASES SUPERFAMILY PROTEIN"/>
    <property type="match status" value="1"/>
</dbReference>
<dbReference type="Pfam" id="PF04072">
    <property type="entry name" value="LCM"/>
    <property type="match status" value="1"/>
</dbReference>
<dbReference type="SUPFAM" id="SSF53335">
    <property type="entry name" value="S-adenosyl-L-methionine-dependent methyltransferases"/>
    <property type="match status" value="1"/>
</dbReference>